<dbReference type="EMBL" id="DQ294633">
    <property type="status" value="NOT_ANNOTATED_CDS"/>
    <property type="molecule type" value="Genomic_RNA"/>
</dbReference>
<dbReference type="Proteomes" id="UP000008663">
    <property type="component" value="Segment"/>
</dbReference>
<dbReference type="GO" id="GO:0075523">
    <property type="term" value="P:viral translational frameshifting"/>
    <property type="evidence" value="ECO:0007669"/>
    <property type="project" value="UniProtKB-KW"/>
</dbReference>
<keyword id="KW-0688">Ribosomal frameshifting</keyword>
<comment type="alternative products">
    <event type="ribosomal frameshifting"/>
    <isoform>
        <id>P0DJX8-1</id>
        <name>2B*</name>
        <sequence type="displayed"/>
    </isoform>
    <isoform>
        <id>P12296-1</id>
        <name>Genome polyprotein</name>
        <sequence type="external"/>
    </isoform>
</comment>
<comment type="disruption phenotype">
    <text evidence="2">Knockout mutants display an attenuated small-plaque phenotype.</text>
</comment>
<comment type="miscellaneous">
    <molecule>Isoform 2B*</molecule>
    <text evidence="2">Produced by -1 ribosomal frameshifting. The N-terminus is translated following a ribosomal skip event.</text>
</comment>
<comment type="similarity">
    <text evidence="3">Belongs to the encephalomyocarditis virus protein 2B* family.</text>
</comment>
<sequence length="129" mass="14191">PFTFKPRQRPVFSDSRSGSVINGSNPTAERLGQQSYGISLYGFARCQRGRPKSNEDYKDVKFSIGCMGKCKRNIEQPGVLETTLKQMCATDCRDDDSSDASGPLDAALLGSLDSSRDHKPDKPVRRNSS</sequence>
<organismHost>
    <name type="scientific">Homo sapiens</name>
    <name type="common">Human</name>
    <dbReference type="NCBI Taxonomy" id="9606"/>
</organismHost>
<organismHost>
    <name type="scientific">Macaca mulatta</name>
    <name type="common">Rhesus macaque</name>
    <dbReference type="NCBI Taxonomy" id="9544"/>
</organismHost>
<organismHost>
    <name type="scientific">Mus musculus</name>
    <name type="common">Mouse</name>
    <dbReference type="NCBI Taxonomy" id="10090"/>
</organismHost>
<feature type="chain" id="PRO_0000423151" description="Protein 2B*">
    <location>
        <begin position="1"/>
        <end position="129"/>
    </location>
</feature>
<feature type="region of interest" description="Disordered" evidence="1">
    <location>
        <begin position="1"/>
        <end position="28"/>
    </location>
</feature>
<feature type="region of interest" description="Disordered" evidence="1">
    <location>
        <begin position="91"/>
        <end position="129"/>
    </location>
</feature>
<feature type="compositionally biased region" description="Polar residues" evidence="1">
    <location>
        <begin position="14"/>
        <end position="28"/>
    </location>
</feature>
<feature type="compositionally biased region" description="Low complexity" evidence="1">
    <location>
        <begin position="99"/>
        <end position="113"/>
    </location>
</feature>
<feature type="compositionally biased region" description="Basic and acidic residues" evidence="1">
    <location>
        <begin position="114"/>
        <end position="129"/>
    </location>
</feature>
<proteinExistence type="inferred from homology"/>
<organism>
    <name type="scientific">Mengo encephalomyocarditis virus</name>
    <dbReference type="NCBI Taxonomy" id="12107"/>
    <lineage>
        <taxon>Viruses</taxon>
        <taxon>Riboviria</taxon>
        <taxon>Orthornavirae</taxon>
        <taxon>Pisuviricota</taxon>
        <taxon>Pisoniviricetes</taxon>
        <taxon>Picornavirales</taxon>
        <taxon>Picornaviridae</taxon>
        <taxon>Caphthovirinae</taxon>
        <taxon>Cardiovirus</taxon>
        <taxon>Cardiovirus A</taxon>
    </lineage>
</organism>
<name>ALT2B_ENMGO</name>
<protein>
    <recommendedName>
        <fullName>Protein 2B*</fullName>
    </recommendedName>
</protein>
<evidence type="ECO:0000256" key="1">
    <source>
        <dbReference type="SAM" id="MobiDB-lite"/>
    </source>
</evidence>
<evidence type="ECO:0000269" key="2">
    <source>
    </source>
</evidence>
<evidence type="ECO:0000305" key="3"/>
<reference key="1">
    <citation type="journal article" date="2005" name="J. Virol.">
        <title>Dipyridamole reversibly inhibits mengovirus RNA replication.</title>
        <authorList>
            <person name="Fata-Hartley C.L."/>
            <person name="Palmenberg A.C."/>
        </authorList>
    </citation>
    <scope>NUCLEOTIDE SEQUENCE [GENOMIC RNA]</scope>
    <source>
        <strain>Medium plague</strain>
    </source>
</reference>
<reference key="2">
    <citation type="journal article" date="2011" name="Proc. Natl. Acad. Sci. U.S.A.">
        <title>Ribosomal frameshifting into an overlapping gene in the 2B-encoding region of the cardiovirus genome.</title>
        <authorList>
            <person name="Loughran G."/>
            <person name="Firth A.E."/>
            <person name="Atkins J.F."/>
        </authorList>
    </citation>
    <scope>IDENTIFICATION</scope>
    <scope>RIBOSOMAL FRAMESHIFTING</scope>
    <scope>DISRUPTION PHENOTYPE</scope>
</reference>
<accession>P0DJX8</accession>